<dbReference type="EC" id="2.7.7.4" evidence="1"/>
<dbReference type="EMBL" id="AE014075">
    <property type="protein sequence ID" value="AAN81768.1"/>
    <property type="molecule type" value="Genomic_DNA"/>
</dbReference>
<dbReference type="RefSeq" id="WP_000372397.1">
    <property type="nucleotide sequence ID" value="NZ_CP051263.1"/>
</dbReference>
<dbReference type="SMR" id="Q8FEJ0"/>
<dbReference type="STRING" id="199310.c3319"/>
<dbReference type="KEGG" id="ecc:c3319"/>
<dbReference type="eggNOG" id="COG0175">
    <property type="taxonomic scope" value="Bacteria"/>
</dbReference>
<dbReference type="HOGENOM" id="CLU_043026_0_0_6"/>
<dbReference type="BioCyc" id="ECOL199310:C3319-MONOMER"/>
<dbReference type="UniPathway" id="UPA00140">
    <property type="reaction ID" value="UER00204"/>
</dbReference>
<dbReference type="Proteomes" id="UP000001410">
    <property type="component" value="Chromosome"/>
</dbReference>
<dbReference type="GO" id="GO:0005524">
    <property type="term" value="F:ATP binding"/>
    <property type="evidence" value="ECO:0007669"/>
    <property type="project" value="UniProtKB-KW"/>
</dbReference>
<dbReference type="GO" id="GO:0004781">
    <property type="term" value="F:sulfate adenylyltransferase (ATP) activity"/>
    <property type="evidence" value="ECO:0007669"/>
    <property type="project" value="UniProtKB-UniRule"/>
</dbReference>
<dbReference type="GO" id="GO:0070814">
    <property type="term" value="P:hydrogen sulfide biosynthetic process"/>
    <property type="evidence" value="ECO:0007669"/>
    <property type="project" value="UniProtKB-UniRule"/>
</dbReference>
<dbReference type="GO" id="GO:0000103">
    <property type="term" value="P:sulfate assimilation"/>
    <property type="evidence" value="ECO:0007669"/>
    <property type="project" value="UniProtKB-UniRule"/>
</dbReference>
<dbReference type="CDD" id="cd23946">
    <property type="entry name" value="Sulfate_adenylyltransferase_2"/>
    <property type="match status" value="1"/>
</dbReference>
<dbReference type="FunFam" id="3.40.50.620:FF:000002">
    <property type="entry name" value="Sulfate adenylyltransferase subunit 2"/>
    <property type="match status" value="1"/>
</dbReference>
<dbReference type="Gene3D" id="3.40.50.620">
    <property type="entry name" value="HUPs"/>
    <property type="match status" value="1"/>
</dbReference>
<dbReference type="HAMAP" id="MF_00064">
    <property type="entry name" value="Sulf_adenylyltr_sub2"/>
    <property type="match status" value="1"/>
</dbReference>
<dbReference type="InterPro" id="IPR002500">
    <property type="entry name" value="PAPS_reduct_dom"/>
</dbReference>
<dbReference type="InterPro" id="IPR014729">
    <property type="entry name" value="Rossmann-like_a/b/a_fold"/>
</dbReference>
<dbReference type="InterPro" id="IPR011784">
    <property type="entry name" value="SO4_adenylTrfase_ssu"/>
</dbReference>
<dbReference type="InterPro" id="IPR050128">
    <property type="entry name" value="Sulfate_adenylyltrnsfr_sub2"/>
</dbReference>
<dbReference type="NCBIfam" id="TIGR02039">
    <property type="entry name" value="CysD"/>
    <property type="match status" value="1"/>
</dbReference>
<dbReference type="NCBIfam" id="NF003587">
    <property type="entry name" value="PRK05253.1"/>
    <property type="match status" value="1"/>
</dbReference>
<dbReference type="NCBIfam" id="NF009214">
    <property type="entry name" value="PRK12563.1"/>
    <property type="match status" value="1"/>
</dbReference>
<dbReference type="PANTHER" id="PTHR43196">
    <property type="entry name" value="SULFATE ADENYLYLTRANSFERASE SUBUNIT 2"/>
    <property type="match status" value="1"/>
</dbReference>
<dbReference type="PANTHER" id="PTHR43196:SF1">
    <property type="entry name" value="SULFATE ADENYLYLTRANSFERASE SUBUNIT 2"/>
    <property type="match status" value="1"/>
</dbReference>
<dbReference type="Pfam" id="PF01507">
    <property type="entry name" value="PAPS_reduct"/>
    <property type="match status" value="1"/>
</dbReference>
<dbReference type="PIRSF" id="PIRSF002936">
    <property type="entry name" value="CysDAde_trans"/>
    <property type="match status" value="1"/>
</dbReference>
<dbReference type="SUPFAM" id="SSF52402">
    <property type="entry name" value="Adenine nucleotide alpha hydrolases-like"/>
    <property type="match status" value="1"/>
</dbReference>
<comment type="function">
    <text evidence="1">With CysN forms the ATP sulfurylase (ATPS) that catalyzes the adenylation of sulfate producing adenosine 5'-phosphosulfate (APS) and diphosphate, the first enzymatic step in sulfur assimilation pathway. APS synthesis involves the formation of a high-energy phosphoric-sulfuric acid anhydride bond driven by GTP hydrolysis by CysN coupled to ATP hydrolysis by CysD.</text>
</comment>
<comment type="catalytic activity">
    <reaction evidence="1">
        <text>sulfate + ATP + H(+) = adenosine 5'-phosphosulfate + diphosphate</text>
        <dbReference type="Rhea" id="RHEA:18133"/>
        <dbReference type="ChEBI" id="CHEBI:15378"/>
        <dbReference type="ChEBI" id="CHEBI:16189"/>
        <dbReference type="ChEBI" id="CHEBI:30616"/>
        <dbReference type="ChEBI" id="CHEBI:33019"/>
        <dbReference type="ChEBI" id="CHEBI:58243"/>
        <dbReference type="EC" id="2.7.7.4"/>
    </reaction>
</comment>
<comment type="pathway">
    <text evidence="1">Sulfur metabolism; hydrogen sulfide biosynthesis; sulfite from sulfate: step 1/3.</text>
</comment>
<comment type="subunit">
    <text evidence="1">Heterodimer composed of CysD, the smaller subunit, and CysN.</text>
</comment>
<comment type="similarity">
    <text evidence="1 2">Belongs to the PAPS reductase family. CysD subfamily.</text>
</comment>
<accession>Q8FEJ0</accession>
<name>CYSD_ECOL6</name>
<organism>
    <name type="scientific">Escherichia coli O6:H1 (strain CFT073 / ATCC 700928 / UPEC)</name>
    <dbReference type="NCBI Taxonomy" id="199310"/>
    <lineage>
        <taxon>Bacteria</taxon>
        <taxon>Pseudomonadati</taxon>
        <taxon>Pseudomonadota</taxon>
        <taxon>Gammaproteobacteria</taxon>
        <taxon>Enterobacterales</taxon>
        <taxon>Enterobacteriaceae</taxon>
        <taxon>Escherichia</taxon>
    </lineage>
</organism>
<protein>
    <recommendedName>
        <fullName evidence="1">Sulfate adenylyltransferase subunit 2</fullName>
        <ecNumber evidence="1">2.7.7.4</ecNumber>
    </recommendedName>
    <alternativeName>
        <fullName evidence="1">ATP-sulfurylase small subunit</fullName>
    </alternativeName>
    <alternativeName>
        <fullName evidence="1">Sulfate adenylate transferase</fullName>
        <shortName evidence="1">SAT</shortName>
    </alternativeName>
</protein>
<gene>
    <name evidence="1" type="primary">cysD</name>
    <name type="ordered locus">c3319</name>
</gene>
<reference key="1">
    <citation type="journal article" date="2002" name="Proc. Natl. Acad. Sci. U.S.A.">
        <title>Extensive mosaic structure revealed by the complete genome sequence of uropathogenic Escherichia coli.</title>
        <authorList>
            <person name="Welch R.A."/>
            <person name="Burland V."/>
            <person name="Plunkett G. III"/>
            <person name="Redford P."/>
            <person name="Roesch P."/>
            <person name="Rasko D."/>
            <person name="Buckles E.L."/>
            <person name="Liou S.-R."/>
            <person name="Boutin A."/>
            <person name="Hackett J."/>
            <person name="Stroud D."/>
            <person name="Mayhew G.F."/>
            <person name="Rose D.J."/>
            <person name="Zhou S."/>
            <person name="Schwartz D.C."/>
            <person name="Perna N.T."/>
            <person name="Mobley H.L.T."/>
            <person name="Donnenberg M.S."/>
            <person name="Blattner F.R."/>
        </authorList>
    </citation>
    <scope>NUCLEOTIDE SEQUENCE [LARGE SCALE GENOMIC DNA]</scope>
    <source>
        <strain>CFT073 / ATCC 700928 / UPEC</strain>
    </source>
</reference>
<proteinExistence type="inferred from homology"/>
<feature type="chain" id="PRO_0000100665" description="Sulfate adenylyltransferase subunit 2">
    <location>
        <begin position="1"/>
        <end position="302"/>
    </location>
</feature>
<keyword id="KW-0067">ATP-binding</keyword>
<keyword id="KW-0547">Nucleotide-binding</keyword>
<keyword id="KW-0548">Nucleotidyltransferase</keyword>
<keyword id="KW-1185">Reference proteome</keyword>
<keyword id="KW-0808">Transferase</keyword>
<sequence length="302" mass="35192">MDQKRLTHLRQLEAESIHIIREVAAEFSNPVMLYSIGKDSSVMLHLARKAFYPGTLPFPLLHVDTGWKFREMYEFRDRTAKAYGCELLVHKNPEGVAMGINPFVHGSAKHTDIMKTEGLKQALNKYGFDAAFGGARRDEEKSRAKERIYSFRDRFHRWDPKNQRPELWHNYNGQINKGESIRVFPLSNWTEQDIWQYIWLENIDIVPLYLAAERPVLERDGMLMMIDDNRINLQSGEVIKKRMVRFRTLGCWPLTGAVESNAQTLPEIIEEMLVSTTSERQGRVIDRDQAGSMELKKRQGYF</sequence>
<evidence type="ECO:0000255" key="1">
    <source>
        <dbReference type="HAMAP-Rule" id="MF_00064"/>
    </source>
</evidence>
<evidence type="ECO:0000305" key="2"/>